<keyword id="KW-0687">Ribonucleoprotein</keyword>
<keyword id="KW-0689">Ribosomal protein</keyword>
<keyword id="KW-0694">RNA-binding</keyword>
<keyword id="KW-0699">rRNA-binding</keyword>
<proteinExistence type="inferred from homology"/>
<protein>
    <recommendedName>
        <fullName evidence="1">Large ribosomal subunit protein uL6</fullName>
    </recommendedName>
    <alternativeName>
        <fullName evidence="2">50S ribosomal protein L6</fullName>
    </alternativeName>
</protein>
<organism>
    <name type="scientific">Pyrococcus abyssi (strain GE5 / Orsay)</name>
    <dbReference type="NCBI Taxonomy" id="272844"/>
    <lineage>
        <taxon>Archaea</taxon>
        <taxon>Methanobacteriati</taxon>
        <taxon>Methanobacteriota</taxon>
        <taxon>Thermococci</taxon>
        <taxon>Thermococcales</taxon>
        <taxon>Thermococcaceae</taxon>
        <taxon>Pyrococcus</taxon>
    </lineage>
</organism>
<gene>
    <name evidence="1" type="primary">rpl6</name>
    <name type="ordered locus">PYRAB03250</name>
    <name type="ORF">PAB2132</name>
</gene>
<accession>Q9V1V1</accession>
<accession>G8ZHV9</accession>
<name>RL6_PYRAB</name>
<sequence length="184" mass="20704">MPVDAWVREEIEIPEGVEVSVQGNTVKVKGPKGEVERELFWPGVKIFVEGGKVVIYKDFPRRKDVAIVRTFKAHINNMIKGVTEGFTYKLKVVYSHFPITVKVQGDEVIIENFLGEKAPRRAKILPGVTVKVKGQEIIVEGIDKEAVGQTAANIEQATRITKWDRRVFQDGIYIVEKAGKPITF</sequence>
<dbReference type="EMBL" id="AJ248284">
    <property type="protein sequence ID" value="CAB49247.1"/>
    <property type="molecule type" value="Genomic_DNA"/>
</dbReference>
<dbReference type="EMBL" id="HE613800">
    <property type="protein sequence ID" value="CCE69702.1"/>
    <property type="molecule type" value="Genomic_DNA"/>
</dbReference>
<dbReference type="PIR" id="H75145">
    <property type="entry name" value="H75145"/>
</dbReference>
<dbReference type="RefSeq" id="WP_010867447.1">
    <property type="nucleotide sequence ID" value="NC_000868.1"/>
</dbReference>
<dbReference type="SMR" id="Q9V1V1"/>
<dbReference type="STRING" id="272844.PAB2132"/>
<dbReference type="KEGG" id="pab:PAB2132"/>
<dbReference type="PATRIC" id="fig|272844.11.peg.346"/>
<dbReference type="eggNOG" id="arCOG04090">
    <property type="taxonomic scope" value="Archaea"/>
</dbReference>
<dbReference type="HOGENOM" id="CLU_065464_0_0_2"/>
<dbReference type="OrthoDB" id="7144at2157"/>
<dbReference type="PhylomeDB" id="Q9V1V1"/>
<dbReference type="Proteomes" id="UP000000810">
    <property type="component" value="Chromosome"/>
</dbReference>
<dbReference type="Proteomes" id="UP000009139">
    <property type="component" value="Chromosome"/>
</dbReference>
<dbReference type="GO" id="GO:0022625">
    <property type="term" value="C:cytosolic large ribosomal subunit"/>
    <property type="evidence" value="ECO:0007669"/>
    <property type="project" value="TreeGrafter"/>
</dbReference>
<dbReference type="GO" id="GO:0019843">
    <property type="term" value="F:rRNA binding"/>
    <property type="evidence" value="ECO:0007669"/>
    <property type="project" value="UniProtKB-UniRule"/>
</dbReference>
<dbReference type="GO" id="GO:0003735">
    <property type="term" value="F:structural constituent of ribosome"/>
    <property type="evidence" value="ECO:0007669"/>
    <property type="project" value="InterPro"/>
</dbReference>
<dbReference type="GO" id="GO:0002181">
    <property type="term" value="P:cytoplasmic translation"/>
    <property type="evidence" value="ECO:0007669"/>
    <property type="project" value="TreeGrafter"/>
</dbReference>
<dbReference type="FunFam" id="3.90.930.12:FF:000008">
    <property type="entry name" value="50S ribosomal protein L6"/>
    <property type="match status" value="1"/>
</dbReference>
<dbReference type="FunFam" id="3.90.930.12:FF:000004">
    <property type="entry name" value="60S ribosomal protein L9"/>
    <property type="match status" value="1"/>
</dbReference>
<dbReference type="Gene3D" id="3.90.930.12">
    <property type="entry name" value="Ribosomal protein L6, alpha-beta domain"/>
    <property type="match status" value="2"/>
</dbReference>
<dbReference type="HAMAP" id="MF_01365_A">
    <property type="entry name" value="Ribosomal_uL6_A"/>
    <property type="match status" value="1"/>
</dbReference>
<dbReference type="InterPro" id="IPR000702">
    <property type="entry name" value="Ribosomal_uL6-like"/>
</dbReference>
<dbReference type="InterPro" id="IPR036789">
    <property type="entry name" value="Ribosomal_uL6-like_a/b-dom_sf"/>
</dbReference>
<dbReference type="InterPro" id="IPR020040">
    <property type="entry name" value="Ribosomal_uL6_a/b-dom"/>
</dbReference>
<dbReference type="InterPro" id="IPR019907">
    <property type="entry name" value="Ribosomal_uL6_arc"/>
</dbReference>
<dbReference type="InterPro" id="IPR002359">
    <property type="entry name" value="Ribosomal_uL6_CS2"/>
</dbReference>
<dbReference type="NCBIfam" id="NF004037">
    <property type="entry name" value="PRK05518.1"/>
    <property type="match status" value="1"/>
</dbReference>
<dbReference type="NCBIfam" id="TIGR03653">
    <property type="entry name" value="uL6_arch"/>
    <property type="match status" value="1"/>
</dbReference>
<dbReference type="PANTHER" id="PTHR11655:SF16">
    <property type="entry name" value="60S RIBOSOMAL PROTEIN L9"/>
    <property type="match status" value="1"/>
</dbReference>
<dbReference type="PANTHER" id="PTHR11655">
    <property type="entry name" value="60S/50S RIBOSOMAL PROTEIN L6/L9"/>
    <property type="match status" value="1"/>
</dbReference>
<dbReference type="Pfam" id="PF00347">
    <property type="entry name" value="Ribosomal_L6"/>
    <property type="match status" value="2"/>
</dbReference>
<dbReference type="PIRSF" id="PIRSF002162">
    <property type="entry name" value="Ribosomal_L6"/>
    <property type="match status" value="1"/>
</dbReference>
<dbReference type="SUPFAM" id="SSF56053">
    <property type="entry name" value="Ribosomal protein L6"/>
    <property type="match status" value="2"/>
</dbReference>
<dbReference type="PROSITE" id="PS00700">
    <property type="entry name" value="RIBOSOMAL_L6_2"/>
    <property type="match status" value="1"/>
</dbReference>
<feature type="chain" id="PRO_0000131088" description="Large ribosomal subunit protein uL6">
    <location>
        <begin position="1"/>
        <end position="184"/>
    </location>
</feature>
<reference key="1">
    <citation type="journal article" date="2003" name="Mol. Microbiol.">
        <title>An integrated analysis of the genome of the hyperthermophilic archaeon Pyrococcus abyssi.</title>
        <authorList>
            <person name="Cohen G.N."/>
            <person name="Barbe V."/>
            <person name="Flament D."/>
            <person name="Galperin M."/>
            <person name="Heilig R."/>
            <person name="Lecompte O."/>
            <person name="Poch O."/>
            <person name="Prieur D."/>
            <person name="Querellou J."/>
            <person name="Ripp R."/>
            <person name="Thierry J.-C."/>
            <person name="Van der Oost J."/>
            <person name="Weissenbach J."/>
            <person name="Zivanovic Y."/>
            <person name="Forterre P."/>
        </authorList>
    </citation>
    <scope>NUCLEOTIDE SEQUENCE [LARGE SCALE GENOMIC DNA]</scope>
    <source>
        <strain>GE5 / Orsay</strain>
    </source>
</reference>
<reference key="2">
    <citation type="journal article" date="2012" name="Curr. Microbiol.">
        <title>Re-annotation of two hyperthermophilic archaea Pyrococcus abyssi GE5 and Pyrococcus furiosus DSM 3638.</title>
        <authorList>
            <person name="Gao J."/>
            <person name="Wang J."/>
        </authorList>
    </citation>
    <scope>GENOME REANNOTATION</scope>
    <source>
        <strain>GE5 / Orsay</strain>
    </source>
</reference>
<comment type="function">
    <text evidence="1">This protein binds to the 23S rRNA, and is important in its secondary structure. It is located near the subunit interface in the base of the L7/L12 stalk, and near the tRNA binding site of the peptidyltransferase center.</text>
</comment>
<comment type="subunit">
    <text evidence="1">Part of the 50S ribosomal subunit.</text>
</comment>
<comment type="similarity">
    <text evidence="1">Belongs to the universal ribosomal protein uL6 family.</text>
</comment>
<evidence type="ECO:0000255" key="1">
    <source>
        <dbReference type="HAMAP-Rule" id="MF_01365"/>
    </source>
</evidence>
<evidence type="ECO:0000305" key="2"/>